<sequence>MTPSLSNFLWSLAWGTLIVVIPATVGLIFISQKDKIQRS</sequence>
<accession>Q3MFU4</accession>
<organism>
    <name type="scientific">Trichormus variabilis (strain ATCC 29413 / PCC 7937)</name>
    <name type="common">Anabaena variabilis</name>
    <dbReference type="NCBI Taxonomy" id="240292"/>
    <lineage>
        <taxon>Bacteria</taxon>
        <taxon>Bacillati</taxon>
        <taxon>Cyanobacteriota</taxon>
        <taxon>Cyanophyceae</taxon>
        <taxon>Nostocales</taxon>
        <taxon>Nostocaceae</taxon>
        <taxon>Trichormus</taxon>
    </lineage>
</organism>
<dbReference type="EMBL" id="CP000117">
    <property type="protein sequence ID" value="ABA20142.1"/>
    <property type="molecule type" value="Genomic_DNA"/>
</dbReference>
<dbReference type="RefSeq" id="WP_010995115.1">
    <property type="nucleotide sequence ID" value="NC_007413.1"/>
</dbReference>
<dbReference type="SMR" id="Q3MFU4"/>
<dbReference type="STRING" id="240292.Ava_0518"/>
<dbReference type="KEGG" id="ava:Ava_0518"/>
<dbReference type="eggNOG" id="ENOG5033AJK">
    <property type="taxonomic scope" value="Bacteria"/>
</dbReference>
<dbReference type="HOGENOM" id="CLU_212837_1_0_3"/>
<dbReference type="Proteomes" id="UP000002533">
    <property type="component" value="Chromosome"/>
</dbReference>
<dbReference type="GO" id="GO:0009523">
    <property type="term" value="C:photosystem II"/>
    <property type="evidence" value="ECO:0007669"/>
    <property type="project" value="UniProtKB-KW"/>
</dbReference>
<dbReference type="GO" id="GO:0031676">
    <property type="term" value="C:plasma membrane-derived thylakoid membrane"/>
    <property type="evidence" value="ECO:0007669"/>
    <property type="project" value="UniProtKB-SubCell"/>
</dbReference>
<dbReference type="GO" id="GO:0015979">
    <property type="term" value="P:photosynthesis"/>
    <property type="evidence" value="ECO:0007669"/>
    <property type="project" value="UniProtKB-UniRule"/>
</dbReference>
<dbReference type="Gene3D" id="1.20.5.510">
    <property type="entry name" value="Single helix bin"/>
    <property type="match status" value="1"/>
</dbReference>
<dbReference type="HAMAP" id="MF_01386">
    <property type="entry name" value="PSII_PsbX_1"/>
    <property type="match status" value="1"/>
</dbReference>
<dbReference type="InterPro" id="IPR009518">
    <property type="entry name" value="PSII_PsbX"/>
</dbReference>
<dbReference type="InterPro" id="IPR023431">
    <property type="entry name" value="PSII_PsbX_type_1_subfam"/>
</dbReference>
<dbReference type="Pfam" id="PF06596">
    <property type="entry name" value="PsbX"/>
    <property type="match status" value="1"/>
</dbReference>
<feature type="chain" id="PRO_0000345364" description="Photosystem II reaction center protein X">
    <location>
        <begin position="1"/>
        <end position="39"/>
    </location>
</feature>
<feature type="transmembrane region" description="Helical" evidence="1">
    <location>
        <begin position="10"/>
        <end position="30"/>
    </location>
</feature>
<name>PSBX_TRIV2</name>
<gene>
    <name evidence="1" type="primary">psbX</name>
    <name type="ordered locus">Ava_0518</name>
</gene>
<comment type="function">
    <text evidence="1">Involved in the binding and/or turnover of quinones at the Q(B) site of photosystem II (PSII). PSII is a light-driven water plastoquinone oxidoreductase, using light energy to abstract electrons from H(2)O, generating a proton gradient subsequently used for ATP formation.</text>
</comment>
<comment type="subunit">
    <text evidence="1">PSII is composed of 1 copy each of membrane proteins PsbA, PsbB, PsbC, PsbD, PsbE, PsbF, PsbH, PsbI, PsbJ, PsbK, PsbL, PsbM, PsbT, PsbX, PsbY, PsbZ, Psb30/Ycf12, peripheral proteins PsbO, CyanoQ (PsbQ), PsbU, PsbV and a large number of cofactors. It forms dimeric complexes.</text>
</comment>
<comment type="subcellular location">
    <subcellularLocation>
        <location evidence="1">Cellular thylakoid membrane</location>
        <topology evidence="1">Single-pass membrane protein</topology>
    </subcellularLocation>
</comment>
<comment type="similarity">
    <text evidence="1">Belongs to the PsbX family. Type 1 subfamily.</text>
</comment>
<reference key="1">
    <citation type="journal article" date="2014" name="Stand. Genomic Sci.">
        <title>Complete genome sequence of Anabaena variabilis ATCC 29413.</title>
        <authorList>
            <person name="Thiel T."/>
            <person name="Pratte B.S."/>
            <person name="Zhong J."/>
            <person name="Goodwin L."/>
            <person name="Copeland A."/>
            <person name="Lucas S."/>
            <person name="Han C."/>
            <person name="Pitluck S."/>
            <person name="Land M.L."/>
            <person name="Kyrpides N.C."/>
            <person name="Woyke T."/>
        </authorList>
    </citation>
    <scope>NUCLEOTIDE SEQUENCE [LARGE SCALE GENOMIC DNA]</scope>
    <source>
        <strain>ATCC 29413 / PCC 7937</strain>
    </source>
</reference>
<evidence type="ECO:0000255" key="1">
    <source>
        <dbReference type="HAMAP-Rule" id="MF_01386"/>
    </source>
</evidence>
<keyword id="KW-0472">Membrane</keyword>
<keyword id="KW-0602">Photosynthesis</keyword>
<keyword id="KW-0604">Photosystem II</keyword>
<keyword id="KW-0793">Thylakoid</keyword>
<keyword id="KW-0812">Transmembrane</keyword>
<keyword id="KW-1133">Transmembrane helix</keyword>
<proteinExistence type="inferred from homology"/>
<protein>
    <recommendedName>
        <fullName evidence="1">Photosystem II reaction center protein X</fullName>
    </recommendedName>
</protein>